<sequence>MGDRRQARELALQALYYFDVDKGSPDELLALFCSNFEDRIDESIRPFFLDLVKGVTQARAEVDDLMNRSSSNWKVSRMPIVDRNIMRMAIFEMLKQPDIPPTVSINEAVEIGKRFGTRGSGAFINGVLDKIRVLKNIDRGEKE</sequence>
<proteinExistence type="inferred from homology"/>
<comment type="function">
    <text evidence="1">Involved in transcription antitermination. Required for transcription of ribosomal RNA (rRNA) genes. Binds specifically to the boxA antiterminator sequence of the ribosomal RNA (rrn) operons.</text>
</comment>
<comment type="similarity">
    <text evidence="1">Belongs to the NusB family.</text>
</comment>
<dbReference type="EMBL" id="CP001087">
    <property type="protein sequence ID" value="ACN16206.1"/>
    <property type="molecule type" value="Genomic_DNA"/>
</dbReference>
<dbReference type="RefSeq" id="WP_015904968.1">
    <property type="nucleotide sequence ID" value="NC_012108.1"/>
</dbReference>
<dbReference type="SMR" id="C0QKW6"/>
<dbReference type="STRING" id="177437.HRM2_31230"/>
<dbReference type="KEGG" id="dat:HRM2_31230"/>
<dbReference type="eggNOG" id="COG0781">
    <property type="taxonomic scope" value="Bacteria"/>
</dbReference>
<dbReference type="HOGENOM" id="CLU_087843_3_3_7"/>
<dbReference type="OrthoDB" id="9797817at2"/>
<dbReference type="Proteomes" id="UP000000442">
    <property type="component" value="Chromosome"/>
</dbReference>
<dbReference type="GO" id="GO:0005829">
    <property type="term" value="C:cytosol"/>
    <property type="evidence" value="ECO:0007669"/>
    <property type="project" value="TreeGrafter"/>
</dbReference>
<dbReference type="GO" id="GO:0003723">
    <property type="term" value="F:RNA binding"/>
    <property type="evidence" value="ECO:0007669"/>
    <property type="project" value="UniProtKB-UniRule"/>
</dbReference>
<dbReference type="GO" id="GO:0006353">
    <property type="term" value="P:DNA-templated transcription termination"/>
    <property type="evidence" value="ECO:0007669"/>
    <property type="project" value="UniProtKB-UniRule"/>
</dbReference>
<dbReference type="GO" id="GO:0031564">
    <property type="term" value="P:transcription antitermination"/>
    <property type="evidence" value="ECO:0007669"/>
    <property type="project" value="UniProtKB-KW"/>
</dbReference>
<dbReference type="CDD" id="cd00619">
    <property type="entry name" value="Terminator_NusB"/>
    <property type="match status" value="1"/>
</dbReference>
<dbReference type="Gene3D" id="1.10.940.10">
    <property type="entry name" value="NusB-like"/>
    <property type="match status" value="1"/>
</dbReference>
<dbReference type="HAMAP" id="MF_00073">
    <property type="entry name" value="NusB"/>
    <property type="match status" value="1"/>
</dbReference>
<dbReference type="InterPro" id="IPR035926">
    <property type="entry name" value="NusB-like_sf"/>
</dbReference>
<dbReference type="InterPro" id="IPR011605">
    <property type="entry name" value="NusB_fam"/>
</dbReference>
<dbReference type="InterPro" id="IPR006027">
    <property type="entry name" value="NusB_RsmB_TIM44"/>
</dbReference>
<dbReference type="NCBIfam" id="TIGR01951">
    <property type="entry name" value="nusB"/>
    <property type="match status" value="1"/>
</dbReference>
<dbReference type="PANTHER" id="PTHR11078:SF3">
    <property type="entry name" value="ANTITERMINATION NUSB DOMAIN-CONTAINING PROTEIN"/>
    <property type="match status" value="1"/>
</dbReference>
<dbReference type="PANTHER" id="PTHR11078">
    <property type="entry name" value="N UTILIZATION SUBSTANCE PROTEIN B-RELATED"/>
    <property type="match status" value="1"/>
</dbReference>
<dbReference type="Pfam" id="PF01029">
    <property type="entry name" value="NusB"/>
    <property type="match status" value="1"/>
</dbReference>
<dbReference type="SUPFAM" id="SSF48013">
    <property type="entry name" value="NusB-like"/>
    <property type="match status" value="1"/>
</dbReference>
<accession>C0QKW6</accession>
<organism>
    <name type="scientific">Desulforapulum autotrophicum (strain ATCC 43914 / DSM 3382 / VKM B-1955 / HRM2)</name>
    <name type="common">Desulfobacterium autotrophicum</name>
    <dbReference type="NCBI Taxonomy" id="177437"/>
    <lineage>
        <taxon>Bacteria</taxon>
        <taxon>Pseudomonadati</taxon>
        <taxon>Thermodesulfobacteriota</taxon>
        <taxon>Desulfobacteria</taxon>
        <taxon>Desulfobacterales</taxon>
        <taxon>Desulfobacteraceae</taxon>
        <taxon>Desulforapulum</taxon>
    </lineage>
</organism>
<keyword id="KW-1185">Reference proteome</keyword>
<keyword id="KW-0694">RNA-binding</keyword>
<keyword id="KW-0804">Transcription</keyword>
<keyword id="KW-0889">Transcription antitermination</keyword>
<keyword id="KW-0805">Transcription regulation</keyword>
<protein>
    <recommendedName>
        <fullName evidence="1">Transcription antitermination protein NusB</fullName>
    </recommendedName>
    <alternativeName>
        <fullName evidence="1">Antitermination factor NusB</fullName>
    </alternativeName>
</protein>
<evidence type="ECO:0000255" key="1">
    <source>
        <dbReference type="HAMAP-Rule" id="MF_00073"/>
    </source>
</evidence>
<gene>
    <name evidence="1" type="primary">nusB</name>
    <name type="ordered locus">HRM2_31230</name>
</gene>
<name>NUSB_DESAH</name>
<reference key="1">
    <citation type="journal article" date="2009" name="Environ. Microbiol.">
        <title>Genome sequence of Desulfobacterium autotrophicum HRM2, a marine sulfate reducer oxidizing organic carbon completely to carbon dioxide.</title>
        <authorList>
            <person name="Strittmatter A.W."/>
            <person name="Liesegang H."/>
            <person name="Rabus R."/>
            <person name="Decker I."/>
            <person name="Amann J."/>
            <person name="Andres S."/>
            <person name="Henne A."/>
            <person name="Fricke W.F."/>
            <person name="Martinez-Arias R."/>
            <person name="Bartels D."/>
            <person name="Goesmann A."/>
            <person name="Krause L."/>
            <person name="Puehler A."/>
            <person name="Klenk H.P."/>
            <person name="Richter M."/>
            <person name="Schuler M."/>
            <person name="Gloeckner F.O."/>
            <person name="Meyerdierks A."/>
            <person name="Gottschalk G."/>
            <person name="Amann R."/>
        </authorList>
    </citation>
    <scope>NUCLEOTIDE SEQUENCE [LARGE SCALE GENOMIC DNA]</scope>
    <source>
        <strain>ATCC 43914 / DSM 3382 / VKM B-1955 / HRM2</strain>
    </source>
</reference>
<feature type="chain" id="PRO_1000202476" description="Transcription antitermination protein NusB">
    <location>
        <begin position="1"/>
        <end position="143"/>
    </location>
</feature>